<accession>P13127</accession>
<organism>
    <name type="scientific">Gallus gallus</name>
    <name type="common">Chicken</name>
    <dbReference type="NCBI Taxonomy" id="9031"/>
    <lineage>
        <taxon>Eukaryota</taxon>
        <taxon>Metazoa</taxon>
        <taxon>Chordata</taxon>
        <taxon>Craniata</taxon>
        <taxon>Vertebrata</taxon>
        <taxon>Euteleostomi</taxon>
        <taxon>Archelosauria</taxon>
        <taxon>Archosauria</taxon>
        <taxon>Dinosauria</taxon>
        <taxon>Saurischia</taxon>
        <taxon>Theropoda</taxon>
        <taxon>Coelurosauria</taxon>
        <taxon>Aves</taxon>
        <taxon>Neognathae</taxon>
        <taxon>Galloanserae</taxon>
        <taxon>Galliformes</taxon>
        <taxon>Phasianidae</taxon>
        <taxon>Phasianinae</taxon>
        <taxon>Gallus</taxon>
    </lineage>
</organism>
<evidence type="ECO:0000250" key="1">
    <source>
        <dbReference type="UniProtKB" id="A0PFK5"/>
    </source>
</evidence>
<evidence type="ECO:0000250" key="2">
    <source>
        <dbReference type="UniProtKB" id="P52907"/>
    </source>
</evidence>
<evidence type="ECO:0000269" key="3">
    <source>
    </source>
</evidence>
<evidence type="ECO:0000305" key="4"/>
<evidence type="ECO:0000305" key="5">
    <source>
    </source>
</evidence>
<evidence type="ECO:0007829" key="6">
    <source>
        <dbReference type="PDB" id="1IZN"/>
    </source>
</evidence>
<evidence type="ECO:0007829" key="7">
    <source>
        <dbReference type="PDB" id="2KXP"/>
    </source>
</evidence>
<evidence type="ECO:0007829" key="8">
    <source>
        <dbReference type="PDB" id="3AA0"/>
    </source>
</evidence>
<evidence type="ECO:0007829" key="9">
    <source>
        <dbReference type="PDB" id="3AA6"/>
    </source>
</evidence>
<evidence type="ECO:0007829" key="10">
    <source>
        <dbReference type="PDB" id="7DS6"/>
    </source>
</evidence>
<name>CAZA1_CHICK</name>
<sequence length="286" mass="32960">MADFEDRVSDEEKVRIAAKFITHAPPGEFNEVFNDVRLLLNNDNLLREGAAHAFAQYNMDQFTPVKIEGYDDQVLITEHGDLGNGRFLDPRNKISFKFDHLRKEASDPQPEDTESALKQWRDACDSALRAYVKDHYPNGFCTVYGKSIDGQQTIIACIESHQFQPKNFWNGRWRSEWKFTITPPTAQVAAVLKIQVHYYEDGNVQLVSHKDIQDSVQVSSDVQTAKEFIKIIENAENEYQTAISENYQTMSDTTFKALRRQLPVTRTKIDWNKILSYKIGKEMQNA</sequence>
<proteinExistence type="evidence at protein level"/>
<keyword id="KW-0002">3D-structure</keyword>
<keyword id="KW-0117">Actin capping</keyword>
<keyword id="KW-0009">Actin-binding</keyword>
<keyword id="KW-0963">Cytoplasm</keyword>
<keyword id="KW-0206">Cytoskeleton</keyword>
<keyword id="KW-0903">Direct protein sequencing</keyword>
<keyword id="KW-1185">Reference proteome</keyword>
<comment type="function">
    <text evidence="1 2">F-actin-capping proteins bind in a Ca(2+)-independent manner to the fast growing ends of actin filaments (barbed end) thereby blocking the exchange of subunits at these ends. Unlike other capping proteins (such as gelsolin and severin), these proteins do not sever actin filaments. May play a role in the formation of epithelial cell junctions (By similarity). Forms, with CAPZB, the barbed end of the fast growing ends of actin filaments in the dynactin complex and stabilizes dynactin structure. The dynactin multiprotein complex activates the molecular motor dynein for ultra-processive transport along microtubules (By similarity).</text>
</comment>
<comment type="subunit">
    <text evidence="2">Component of the F-actin capping complex, composed of a heterodimer of an alpha and a beta subunit. Subunit of dynactin, a multiprotein complex part of a tripartite complex with dynein and a adapter, such as BICDL1, BICD2 or HOOK3. The dynactin complex is built around ACTR1A/ACTB filament and consists of an actin-related filament composed of a shoulder domain, a pointed end and a barbed end. Its length is defined by its flexible shoulder domain. The soulder is composed of 2 DCTN1 subunits, 4 DCTN2 and 2 DCTN3. The 4 DCNT2 (via N-terminus) bind the ACTR1A filament and act as molecular rulers to determine the length. The pointed end is important for binding dynein-dynactin cargo adapters (By similarity). Component of the WASH complex (By similarity).</text>
</comment>
<comment type="interaction">
    <interactant intactId="EBI-1036025">
        <id>P13127</id>
    </interactant>
    <interactant intactId="EBI-15845670">
        <id>P14315-1</id>
        <label>CAPZB</label>
    </interactant>
    <organismsDiffer>false</organismsDiffer>
    <experiments>14</experiments>
</comment>
<comment type="subcellular location">
    <subcellularLocation>
        <location evidence="3">Cytoplasm</location>
        <location evidence="3">Myofibril</location>
        <location evidence="3">Sarcomere</location>
        <location evidence="3">Z line</location>
    </subcellularLocation>
    <subcellularLocation>
        <location evidence="1">Cytoplasm</location>
        <location evidence="1">Cytoskeleton</location>
    </subcellularLocation>
    <text evidence="3">CapZ is located at the Z line in muscle.</text>
</comment>
<comment type="tissue specificity">
    <text>Present in all tissues examined.</text>
</comment>
<comment type="similarity">
    <text evidence="4">Belongs to the F-actin-capping protein alpha subunit family.</text>
</comment>
<comment type="caution">
    <text evidence="5">Was originally thought to have an internal disulfide bond.</text>
</comment>
<protein>
    <recommendedName>
        <fullName>F-actin-capping protein subunit alpha-1</fullName>
    </recommendedName>
    <alternativeName>
        <fullName>Beta-actinin subunit I</fullName>
    </alternativeName>
    <alternativeName>
        <fullName>CapZ 36/32</fullName>
    </alternativeName>
</protein>
<feature type="chain" id="PRO_0000208634" description="F-actin-capping protein subunit alpha-1">
    <location>
        <begin position="1"/>
        <end position="286"/>
    </location>
</feature>
<feature type="sequence variant">
    <original>F</original>
    <variation>I</variation>
    <location>
        <position position="163"/>
    </location>
</feature>
<feature type="sequence conflict" description="In Ref. 2; AA sequence." evidence="4" ref="2">
    <original>D</original>
    <variation>S</variation>
    <location>
        <position position="221"/>
    </location>
</feature>
<feature type="sequence conflict" description="In Ref. 2; AA sequence." evidence="4" ref="2">
    <original>I</original>
    <variation>V</variation>
    <location>
        <position position="232"/>
    </location>
</feature>
<feature type="sequence conflict" description="In Ref. 2; AA sequence." evidence="4" ref="2">
    <original>N</original>
    <variation>A</variation>
    <location>
        <position position="234"/>
    </location>
</feature>
<feature type="sequence conflict" description="In Ref. 2; AA sequence." evidence="4" ref="2">
    <original>E</original>
    <variation>Q</variation>
    <location>
        <position position="245"/>
    </location>
</feature>
<feature type="helix" evidence="10">
    <location>
        <begin position="4"/>
        <end position="6"/>
    </location>
</feature>
<feature type="helix" evidence="10">
    <location>
        <begin position="10"/>
        <end position="22"/>
    </location>
</feature>
<feature type="helix" evidence="10">
    <location>
        <begin position="29"/>
        <end position="40"/>
    </location>
</feature>
<feature type="helix" evidence="10">
    <location>
        <begin position="43"/>
        <end position="61"/>
    </location>
</feature>
<feature type="strand" evidence="6">
    <location>
        <begin position="63"/>
        <end position="65"/>
    </location>
</feature>
<feature type="strand" evidence="8">
    <location>
        <begin position="70"/>
        <end position="72"/>
    </location>
</feature>
<feature type="strand" evidence="6">
    <location>
        <begin position="74"/>
        <end position="76"/>
    </location>
</feature>
<feature type="helix" evidence="10">
    <location>
        <begin position="78"/>
        <end position="80"/>
    </location>
</feature>
<feature type="strand" evidence="10">
    <location>
        <begin position="81"/>
        <end position="83"/>
    </location>
</feature>
<feature type="strand" evidence="10">
    <location>
        <begin position="86"/>
        <end position="89"/>
    </location>
</feature>
<feature type="turn" evidence="10">
    <location>
        <begin position="90"/>
        <end position="93"/>
    </location>
</feature>
<feature type="strand" evidence="10">
    <location>
        <begin position="94"/>
        <end position="99"/>
    </location>
</feature>
<feature type="turn" evidence="10">
    <location>
        <begin position="100"/>
        <end position="103"/>
    </location>
</feature>
<feature type="strand" evidence="10">
    <location>
        <begin position="104"/>
        <end position="110"/>
    </location>
</feature>
<feature type="strand" evidence="9">
    <location>
        <begin position="115"/>
        <end position="117"/>
    </location>
</feature>
<feature type="helix" evidence="10">
    <location>
        <begin position="118"/>
        <end position="135"/>
    </location>
</feature>
<feature type="strand" evidence="8">
    <location>
        <begin position="136"/>
        <end position="138"/>
    </location>
</feature>
<feature type="strand" evidence="10">
    <location>
        <begin position="140"/>
        <end position="148"/>
    </location>
</feature>
<feature type="strand" evidence="10">
    <location>
        <begin position="151"/>
        <end position="164"/>
    </location>
</feature>
<feature type="helix" evidence="10">
    <location>
        <begin position="165"/>
        <end position="167"/>
    </location>
</feature>
<feature type="strand" evidence="10">
    <location>
        <begin position="169"/>
        <end position="180"/>
    </location>
</feature>
<feature type="strand" evidence="10">
    <location>
        <begin position="185"/>
        <end position="198"/>
    </location>
</feature>
<feature type="strand" evidence="10">
    <location>
        <begin position="202"/>
        <end position="217"/>
    </location>
</feature>
<feature type="helix" evidence="10">
    <location>
        <begin position="221"/>
        <end position="252"/>
    </location>
</feature>
<feature type="helix" evidence="10">
    <location>
        <begin position="254"/>
        <end position="258"/>
    </location>
</feature>
<feature type="helix" evidence="10">
    <location>
        <begin position="271"/>
        <end position="274"/>
    </location>
</feature>
<feature type="turn" evidence="7">
    <location>
        <begin position="277"/>
        <end position="279"/>
    </location>
</feature>
<gene>
    <name type="primary">CAPZA1</name>
</gene>
<reference key="1">
    <citation type="journal article" date="1989" name="Proc. Natl. Acad. Sci. U.S.A.">
        <title>Isolation and characterization of cDNA encoding the alpha subunit of Cap Z(36/32), an actin-capping protein from the Z line of skeletal muscle.</title>
        <authorList>
            <person name="Casella J.F."/>
            <person name="Casella S.J."/>
            <person name="Hollands J.A."/>
            <person name="Caldwell J.E."/>
            <person name="Cooper J."/>
        </authorList>
    </citation>
    <scope>NUCLEOTIDE SEQUENCE [MRNA]</scope>
    <scope>PARTIAL PROTEIN SEQUENCE</scope>
    <scope>SUBCELLULAR LOCATION</scope>
    <source>
        <tissue>Embryo</tissue>
    </source>
</reference>
<reference key="2">
    <citation type="journal article" date="1990" name="J. Biol. Chem.">
        <title>Beta-actinin is equivalent to Cap Z protein.</title>
        <authorList>
            <person name="Maruyama K."/>
            <person name="Kurokawa H."/>
            <person name="Oosawa M."/>
            <person name="Shimaoka S."/>
            <person name="Yamamoto H."/>
            <person name="Ito M."/>
            <person name="Maruyama K."/>
        </authorList>
    </citation>
    <scope>PROTEIN SEQUENCE OF 211-221 AND 231-250</scope>
    <source>
        <tissue>Muscle</tissue>
    </source>
</reference>
<reference key="3">
    <citation type="journal article" date="2003" name="EMBO J.">
        <title>Crystal structure of CapZ: structural basis for actin filament barbed end capping.</title>
        <authorList>
            <person name="Yamashita A."/>
            <person name="Maeda K."/>
            <person name="Maeda Y."/>
        </authorList>
    </citation>
    <scope>X-RAY CRYSTALLOGRAPHY (2.1 ANGSTROMS)</scope>
    <scope>SUBUNIT</scope>
</reference>
<dbReference type="EMBL" id="M25534">
    <property type="protein sequence ID" value="AAA48657.1"/>
    <property type="molecule type" value="mRNA"/>
</dbReference>
<dbReference type="PIR" id="A33546">
    <property type="entry name" value="A33546"/>
</dbReference>
<dbReference type="RefSeq" id="NP_990846.1">
    <property type="nucleotide sequence ID" value="NM_205515.3"/>
</dbReference>
<dbReference type="PDB" id="1IZN">
    <property type="method" value="X-ray"/>
    <property type="resolution" value="2.10 A"/>
    <property type="chains" value="A/C=1-286"/>
</dbReference>
<dbReference type="PDB" id="2KXP">
    <property type="method" value="NMR"/>
    <property type="chains" value="A=7-281"/>
</dbReference>
<dbReference type="PDB" id="2KZ7">
    <property type="method" value="NMR"/>
    <property type="chains" value="A=1-286"/>
</dbReference>
<dbReference type="PDB" id="3AA0">
    <property type="method" value="X-ray"/>
    <property type="resolution" value="1.70 A"/>
    <property type="chains" value="A=1-286"/>
</dbReference>
<dbReference type="PDB" id="3AA1">
    <property type="method" value="X-ray"/>
    <property type="resolution" value="1.90 A"/>
    <property type="chains" value="A=1-286"/>
</dbReference>
<dbReference type="PDB" id="3AA6">
    <property type="method" value="X-ray"/>
    <property type="resolution" value="1.90 A"/>
    <property type="chains" value="A=1-286"/>
</dbReference>
<dbReference type="PDB" id="3AA7">
    <property type="method" value="X-ray"/>
    <property type="resolution" value="1.90 A"/>
    <property type="chains" value="A=1-286"/>
</dbReference>
<dbReference type="PDB" id="3AAA">
    <property type="method" value="X-ray"/>
    <property type="resolution" value="2.20 A"/>
    <property type="chains" value="A=1-286"/>
</dbReference>
<dbReference type="PDB" id="3AAE">
    <property type="method" value="X-ray"/>
    <property type="resolution" value="3.30 A"/>
    <property type="chains" value="A/C/E/G/I=1-286"/>
</dbReference>
<dbReference type="PDB" id="3LK2">
    <property type="method" value="X-ray"/>
    <property type="resolution" value="2.20 A"/>
    <property type="chains" value="A=1-286"/>
</dbReference>
<dbReference type="PDB" id="3LK3">
    <property type="method" value="X-ray"/>
    <property type="resolution" value="2.68 A"/>
    <property type="chains" value="A=1-286"/>
</dbReference>
<dbReference type="PDB" id="3LK4">
    <property type="method" value="X-ray"/>
    <property type="resolution" value="1.99 A"/>
    <property type="chains" value="1/4/7/A/D/G/J/M/P/S/V/Y=1-286"/>
</dbReference>
<dbReference type="PDB" id="7DS2">
    <property type="method" value="X-ray"/>
    <property type="resolution" value="1.95 A"/>
    <property type="chains" value="A=1-286"/>
</dbReference>
<dbReference type="PDB" id="7DS3">
    <property type="method" value="X-ray"/>
    <property type="resolution" value="2.09 A"/>
    <property type="chains" value="A=1-286"/>
</dbReference>
<dbReference type="PDB" id="7DS4">
    <property type="method" value="X-ray"/>
    <property type="resolution" value="1.85 A"/>
    <property type="chains" value="A=1-286"/>
</dbReference>
<dbReference type="PDB" id="7DS6">
    <property type="method" value="X-ray"/>
    <property type="resolution" value="1.69 A"/>
    <property type="chains" value="A=1-286"/>
</dbReference>
<dbReference type="PDB" id="7DS8">
    <property type="method" value="X-ray"/>
    <property type="resolution" value="1.95 A"/>
    <property type="chains" value="A=1-286"/>
</dbReference>
<dbReference type="PDB" id="7DSA">
    <property type="method" value="X-ray"/>
    <property type="resolution" value="2.80 A"/>
    <property type="chains" value="A=1-286"/>
</dbReference>
<dbReference type="PDB" id="7DSB">
    <property type="method" value="X-ray"/>
    <property type="resolution" value="2.44 A"/>
    <property type="chains" value="A=1-286"/>
</dbReference>
<dbReference type="PDBsum" id="1IZN"/>
<dbReference type="PDBsum" id="2KXP"/>
<dbReference type="PDBsum" id="2KZ7"/>
<dbReference type="PDBsum" id="3AA0"/>
<dbReference type="PDBsum" id="3AA1"/>
<dbReference type="PDBsum" id="3AA6"/>
<dbReference type="PDBsum" id="3AA7"/>
<dbReference type="PDBsum" id="3AAA"/>
<dbReference type="PDBsum" id="3AAE"/>
<dbReference type="PDBsum" id="3LK2"/>
<dbReference type="PDBsum" id="3LK3"/>
<dbReference type="PDBsum" id="3LK4"/>
<dbReference type="PDBsum" id="7DS2"/>
<dbReference type="PDBsum" id="7DS3"/>
<dbReference type="PDBsum" id="7DS4"/>
<dbReference type="PDBsum" id="7DS6"/>
<dbReference type="PDBsum" id="7DS8"/>
<dbReference type="PDBsum" id="7DSA"/>
<dbReference type="PDBsum" id="7DSB"/>
<dbReference type="SMR" id="P13127"/>
<dbReference type="DIP" id="DIP-35364N"/>
<dbReference type="FunCoup" id="P13127">
    <property type="interactions" value="3276"/>
</dbReference>
<dbReference type="IntAct" id="P13127">
    <property type="interactions" value="8"/>
</dbReference>
<dbReference type="MINT" id="P13127"/>
<dbReference type="STRING" id="9031.ENSGALP00000056898"/>
<dbReference type="PaxDb" id="9031-ENSGALP00000002349"/>
<dbReference type="Ensembl" id="ENSGALT00010066563.1">
    <property type="protein sequence ID" value="ENSGALP00010040768.1"/>
    <property type="gene ID" value="ENSGALG00010027457.1"/>
</dbReference>
<dbReference type="GeneID" id="396521"/>
<dbReference type="KEGG" id="gga:396521"/>
<dbReference type="CTD" id="829"/>
<dbReference type="VEuPathDB" id="HostDB:geneid_396521"/>
<dbReference type="eggNOG" id="KOG0836">
    <property type="taxonomic scope" value="Eukaryota"/>
</dbReference>
<dbReference type="GeneTree" id="ENSGT00950000183119"/>
<dbReference type="HOGENOM" id="CLU_045161_0_0_1"/>
<dbReference type="InParanoid" id="P13127"/>
<dbReference type="OMA" id="QEHFPNA"/>
<dbReference type="OrthoDB" id="340550at2759"/>
<dbReference type="PhylomeDB" id="P13127"/>
<dbReference type="Reactome" id="R-GGA-3371497">
    <property type="pathway name" value="HSP90 chaperone cycle for steroid hormone receptors (SHR) in the presence of ligand"/>
</dbReference>
<dbReference type="Reactome" id="R-GGA-6807878">
    <property type="pathway name" value="COPI-mediated anterograde transport"/>
</dbReference>
<dbReference type="Reactome" id="R-GGA-6811436">
    <property type="pathway name" value="COPI-independent Golgi-to-ER retrograde traffic"/>
</dbReference>
<dbReference type="Reactome" id="R-GGA-879415">
    <property type="pathway name" value="Advanced glycosylation endproduct receptor signaling"/>
</dbReference>
<dbReference type="Reactome" id="R-GGA-983231">
    <property type="pathway name" value="Factors involved in megakaryocyte development and platelet production"/>
</dbReference>
<dbReference type="EvolutionaryTrace" id="P13127"/>
<dbReference type="PRO" id="PR:P13127"/>
<dbReference type="Proteomes" id="UP000000539">
    <property type="component" value="Chromosome 26"/>
</dbReference>
<dbReference type="Bgee" id="ENSGALG00000001547">
    <property type="expression patterns" value="Expressed in spleen and 14 other cell types or tissues"/>
</dbReference>
<dbReference type="GO" id="GO:0030863">
    <property type="term" value="C:cortical cytoskeleton"/>
    <property type="evidence" value="ECO:0000318"/>
    <property type="project" value="GO_Central"/>
</dbReference>
<dbReference type="GO" id="GO:0005829">
    <property type="term" value="C:cytosol"/>
    <property type="evidence" value="ECO:0000304"/>
    <property type="project" value="Reactome"/>
</dbReference>
<dbReference type="GO" id="GO:0008290">
    <property type="term" value="C:F-actin capping protein complex"/>
    <property type="evidence" value="ECO:0000318"/>
    <property type="project" value="GO_Central"/>
</dbReference>
<dbReference type="GO" id="GO:0005886">
    <property type="term" value="C:plasma membrane"/>
    <property type="evidence" value="ECO:0000314"/>
    <property type="project" value="AgBase"/>
</dbReference>
<dbReference type="GO" id="GO:0071203">
    <property type="term" value="C:WASH complex"/>
    <property type="evidence" value="ECO:0000250"/>
    <property type="project" value="UniProtKB"/>
</dbReference>
<dbReference type="GO" id="GO:0030018">
    <property type="term" value="C:Z disc"/>
    <property type="evidence" value="ECO:0007669"/>
    <property type="project" value="UniProtKB-SubCell"/>
</dbReference>
<dbReference type="GO" id="GO:0051015">
    <property type="term" value="F:actin filament binding"/>
    <property type="evidence" value="ECO:0000318"/>
    <property type="project" value="GO_Central"/>
</dbReference>
<dbReference type="GO" id="GO:0030036">
    <property type="term" value="P:actin cytoskeleton organization"/>
    <property type="evidence" value="ECO:0000318"/>
    <property type="project" value="GO_Central"/>
</dbReference>
<dbReference type="GO" id="GO:0051016">
    <property type="term" value="P:barbed-end actin filament capping"/>
    <property type="evidence" value="ECO:0000318"/>
    <property type="project" value="GO_Central"/>
</dbReference>
<dbReference type="GO" id="GO:0034329">
    <property type="term" value="P:cell junction assembly"/>
    <property type="evidence" value="ECO:0000250"/>
    <property type="project" value="UniProtKB"/>
</dbReference>
<dbReference type="FunFam" id="3.30.1140.60:FF:000001">
    <property type="entry name" value="F-actin-capping protein subunit alpha"/>
    <property type="match status" value="1"/>
</dbReference>
<dbReference type="FunFam" id="3.90.1150.210:FF:000002">
    <property type="entry name" value="F-actin-capping protein subunit alpha"/>
    <property type="match status" value="1"/>
</dbReference>
<dbReference type="Gene3D" id="3.30.1140.60">
    <property type="entry name" value="F-actin capping protein, alpha subunit"/>
    <property type="match status" value="1"/>
</dbReference>
<dbReference type="Gene3D" id="3.90.1150.210">
    <property type="entry name" value="F-actin capping protein, beta subunit"/>
    <property type="match status" value="1"/>
</dbReference>
<dbReference type="InterPro" id="IPR002189">
    <property type="entry name" value="CapZ_alpha"/>
</dbReference>
<dbReference type="InterPro" id="IPR037282">
    <property type="entry name" value="CapZ_alpha/beta"/>
</dbReference>
<dbReference type="InterPro" id="IPR042276">
    <property type="entry name" value="CapZ_alpha/beta_2"/>
</dbReference>
<dbReference type="InterPro" id="IPR042489">
    <property type="entry name" value="CapZ_alpha_1"/>
</dbReference>
<dbReference type="InterPro" id="IPR017865">
    <property type="entry name" value="F-actin_cap_asu_CS"/>
</dbReference>
<dbReference type="PANTHER" id="PTHR10653">
    <property type="entry name" value="F-ACTIN-CAPPING PROTEIN SUBUNIT ALPHA"/>
    <property type="match status" value="1"/>
</dbReference>
<dbReference type="PANTHER" id="PTHR10653:SF5">
    <property type="entry name" value="F-ACTIN-CAPPING PROTEIN SUBUNIT ALPHA-1"/>
    <property type="match status" value="1"/>
</dbReference>
<dbReference type="Pfam" id="PF01267">
    <property type="entry name" value="F-actin_cap_A"/>
    <property type="match status" value="1"/>
</dbReference>
<dbReference type="PRINTS" id="PR00191">
    <property type="entry name" value="FACTINCAPA"/>
</dbReference>
<dbReference type="SUPFAM" id="SSF90096">
    <property type="entry name" value="Subunits of heterodimeric actin filament capping protein Capz"/>
    <property type="match status" value="1"/>
</dbReference>
<dbReference type="PROSITE" id="PS00748">
    <property type="entry name" value="F_ACTIN_CAPPING_A_1"/>
    <property type="match status" value="1"/>
</dbReference>
<dbReference type="PROSITE" id="PS00749">
    <property type="entry name" value="F_ACTIN_CAPPING_A_2"/>
    <property type="match status" value="1"/>
</dbReference>